<evidence type="ECO:0000255" key="1">
    <source>
        <dbReference type="HAMAP-Rule" id="MF_00110"/>
    </source>
</evidence>
<protein>
    <recommendedName>
        <fullName evidence="1">3-dehydroquinate synthase</fullName>
        <shortName evidence="1">DHQS</shortName>
        <ecNumber evidence="1">4.2.3.4</ecNumber>
    </recommendedName>
</protein>
<sequence>MQEILIPLKEKSYKVFLGELPKIELKQKALIISDSIVAGLHLSYLLKRLKALEVRVCVIESGEKYKNFHSLERILNNAFEMQLNRHSLMIALGGGVISDMVGFASSIYFRGIGFINIPTTLLAQVDASVGGKTGINTPYGKNLIGSFYQPKAVYMDLVFLKTLEKREFQAGVAEIIKMAVCFDKNLVETLETKDLKDCLEEVIFQSVNIKAQVVMQDEKEQNIRAGLNYGHTFGHAIEKETDYERFLHGEAIAIGMRMANDLALSLGMLTLKEYERIENLLKKFDLIFHYKITDIQKFYERLFLDKKSENKTIKFILPKGIGAFEIVSHIPKETILKVLEKWH</sequence>
<organism>
    <name type="scientific">Helicobacter pylori (strain HPAG1)</name>
    <dbReference type="NCBI Taxonomy" id="357544"/>
    <lineage>
        <taxon>Bacteria</taxon>
        <taxon>Pseudomonadati</taxon>
        <taxon>Campylobacterota</taxon>
        <taxon>Epsilonproteobacteria</taxon>
        <taxon>Campylobacterales</taxon>
        <taxon>Helicobacteraceae</taxon>
        <taxon>Helicobacter</taxon>
    </lineage>
</organism>
<gene>
    <name evidence="1" type="primary">aroB</name>
    <name type="ordered locus">HPAG1_0285</name>
</gene>
<reference key="1">
    <citation type="journal article" date="2006" name="Proc. Natl. Acad. Sci. U.S.A.">
        <title>The complete genome sequence of a chronic atrophic gastritis Helicobacter pylori strain: evolution during disease progression.</title>
        <authorList>
            <person name="Oh J.D."/>
            <person name="Kling-Baeckhed H."/>
            <person name="Giannakis M."/>
            <person name="Xu J."/>
            <person name="Fulton R.S."/>
            <person name="Fulton L.A."/>
            <person name="Cordum H.S."/>
            <person name="Wang C."/>
            <person name="Elliott G."/>
            <person name="Edwards J."/>
            <person name="Mardis E.R."/>
            <person name="Engstrand L.G."/>
            <person name="Gordon J.I."/>
        </authorList>
    </citation>
    <scope>NUCLEOTIDE SEQUENCE [LARGE SCALE GENOMIC DNA]</scope>
    <source>
        <strain>HPAG1</strain>
    </source>
</reference>
<comment type="function">
    <text evidence="1">Catalyzes the conversion of 3-deoxy-D-arabino-heptulosonate 7-phosphate (DAHP) to dehydroquinate (DHQ).</text>
</comment>
<comment type="catalytic activity">
    <reaction evidence="1">
        <text>7-phospho-2-dehydro-3-deoxy-D-arabino-heptonate = 3-dehydroquinate + phosphate</text>
        <dbReference type="Rhea" id="RHEA:21968"/>
        <dbReference type="ChEBI" id="CHEBI:32364"/>
        <dbReference type="ChEBI" id="CHEBI:43474"/>
        <dbReference type="ChEBI" id="CHEBI:58394"/>
        <dbReference type="EC" id="4.2.3.4"/>
    </reaction>
</comment>
<comment type="cofactor">
    <cofactor evidence="1">
        <name>Co(2+)</name>
        <dbReference type="ChEBI" id="CHEBI:48828"/>
    </cofactor>
    <cofactor evidence="1">
        <name>Zn(2+)</name>
        <dbReference type="ChEBI" id="CHEBI:29105"/>
    </cofactor>
    <text evidence="1">Binds 1 divalent metal cation per subunit. Can use either Co(2+) or Zn(2+).</text>
</comment>
<comment type="cofactor">
    <cofactor evidence="1">
        <name>NAD(+)</name>
        <dbReference type="ChEBI" id="CHEBI:57540"/>
    </cofactor>
</comment>
<comment type="pathway">
    <text evidence="1">Metabolic intermediate biosynthesis; chorismate biosynthesis; chorismate from D-erythrose 4-phosphate and phosphoenolpyruvate: step 2/7.</text>
</comment>
<comment type="subcellular location">
    <subcellularLocation>
        <location evidence="1">Cytoplasm</location>
    </subcellularLocation>
</comment>
<comment type="similarity">
    <text evidence="1">Belongs to the sugar phosphate cyclases superfamily. Dehydroquinate synthase family.</text>
</comment>
<feature type="chain" id="PRO_1000094533" description="3-dehydroquinate synthase">
    <location>
        <begin position="1"/>
        <end position="343"/>
    </location>
</feature>
<feature type="binding site" evidence="1">
    <location>
        <begin position="61"/>
        <end position="66"/>
    </location>
    <ligand>
        <name>NAD(+)</name>
        <dbReference type="ChEBI" id="CHEBI:57540"/>
    </ligand>
</feature>
<feature type="binding site" evidence="1">
    <location>
        <begin position="95"/>
        <end position="99"/>
    </location>
    <ligand>
        <name>NAD(+)</name>
        <dbReference type="ChEBI" id="CHEBI:57540"/>
    </ligand>
</feature>
<feature type="binding site" evidence="1">
    <location>
        <begin position="119"/>
        <end position="120"/>
    </location>
    <ligand>
        <name>NAD(+)</name>
        <dbReference type="ChEBI" id="CHEBI:57540"/>
    </ligand>
</feature>
<feature type="binding site" evidence="1">
    <location>
        <position position="132"/>
    </location>
    <ligand>
        <name>NAD(+)</name>
        <dbReference type="ChEBI" id="CHEBI:57540"/>
    </ligand>
</feature>
<feature type="binding site" evidence="1">
    <location>
        <position position="141"/>
    </location>
    <ligand>
        <name>NAD(+)</name>
        <dbReference type="ChEBI" id="CHEBI:57540"/>
    </ligand>
</feature>
<feature type="binding site" evidence="1">
    <location>
        <begin position="159"/>
        <end position="162"/>
    </location>
    <ligand>
        <name>NAD(+)</name>
        <dbReference type="ChEBI" id="CHEBI:57540"/>
    </ligand>
</feature>
<feature type="binding site" evidence="1">
    <location>
        <position position="174"/>
    </location>
    <ligand>
        <name>Zn(2+)</name>
        <dbReference type="ChEBI" id="CHEBI:29105"/>
    </ligand>
</feature>
<feature type="binding site" evidence="1">
    <location>
        <position position="231"/>
    </location>
    <ligand>
        <name>Zn(2+)</name>
        <dbReference type="ChEBI" id="CHEBI:29105"/>
    </ligand>
</feature>
<feature type="binding site" evidence="1">
    <location>
        <position position="248"/>
    </location>
    <ligand>
        <name>Zn(2+)</name>
        <dbReference type="ChEBI" id="CHEBI:29105"/>
    </ligand>
</feature>
<keyword id="KW-0028">Amino-acid biosynthesis</keyword>
<keyword id="KW-0057">Aromatic amino acid biosynthesis</keyword>
<keyword id="KW-0170">Cobalt</keyword>
<keyword id="KW-0963">Cytoplasm</keyword>
<keyword id="KW-0456">Lyase</keyword>
<keyword id="KW-0479">Metal-binding</keyword>
<keyword id="KW-0520">NAD</keyword>
<keyword id="KW-0547">Nucleotide-binding</keyword>
<keyword id="KW-0862">Zinc</keyword>
<dbReference type="EC" id="4.2.3.4" evidence="1"/>
<dbReference type="EMBL" id="CP000241">
    <property type="protein sequence ID" value="ABF84352.1"/>
    <property type="molecule type" value="Genomic_DNA"/>
</dbReference>
<dbReference type="RefSeq" id="WP_001156144.1">
    <property type="nucleotide sequence ID" value="NC_008086.1"/>
</dbReference>
<dbReference type="SMR" id="Q1CUM0"/>
<dbReference type="KEGG" id="hpa:HPAG1_0285"/>
<dbReference type="HOGENOM" id="CLU_001201_0_2_7"/>
<dbReference type="UniPathway" id="UPA00053">
    <property type="reaction ID" value="UER00085"/>
</dbReference>
<dbReference type="GO" id="GO:0005737">
    <property type="term" value="C:cytoplasm"/>
    <property type="evidence" value="ECO:0007669"/>
    <property type="project" value="UniProtKB-SubCell"/>
</dbReference>
<dbReference type="GO" id="GO:0003856">
    <property type="term" value="F:3-dehydroquinate synthase activity"/>
    <property type="evidence" value="ECO:0007669"/>
    <property type="project" value="UniProtKB-UniRule"/>
</dbReference>
<dbReference type="GO" id="GO:0046872">
    <property type="term" value="F:metal ion binding"/>
    <property type="evidence" value="ECO:0007669"/>
    <property type="project" value="UniProtKB-KW"/>
</dbReference>
<dbReference type="GO" id="GO:0000166">
    <property type="term" value="F:nucleotide binding"/>
    <property type="evidence" value="ECO:0007669"/>
    <property type="project" value="UniProtKB-KW"/>
</dbReference>
<dbReference type="GO" id="GO:0008652">
    <property type="term" value="P:amino acid biosynthetic process"/>
    <property type="evidence" value="ECO:0007669"/>
    <property type="project" value="UniProtKB-KW"/>
</dbReference>
<dbReference type="GO" id="GO:0009073">
    <property type="term" value="P:aromatic amino acid family biosynthetic process"/>
    <property type="evidence" value="ECO:0007669"/>
    <property type="project" value="UniProtKB-KW"/>
</dbReference>
<dbReference type="GO" id="GO:0009423">
    <property type="term" value="P:chorismate biosynthetic process"/>
    <property type="evidence" value="ECO:0007669"/>
    <property type="project" value="UniProtKB-UniRule"/>
</dbReference>
<dbReference type="CDD" id="cd08195">
    <property type="entry name" value="DHQS"/>
    <property type="match status" value="1"/>
</dbReference>
<dbReference type="FunFam" id="1.20.1090.10:FF:000025">
    <property type="entry name" value="3-dehydroquinate synthase"/>
    <property type="match status" value="1"/>
</dbReference>
<dbReference type="FunFam" id="3.40.50.1970:FF:000007">
    <property type="entry name" value="Pentafunctional AROM polypeptide"/>
    <property type="match status" value="1"/>
</dbReference>
<dbReference type="Gene3D" id="3.40.50.1970">
    <property type="match status" value="1"/>
</dbReference>
<dbReference type="Gene3D" id="1.20.1090.10">
    <property type="entry name" value="Dehydroquinate synthase-like - alpha domain"/>
    <property type="match status" value="1"/>
</dbReference>
<dbReference type="HAMAP" id="MF_00110">
    <property type="entry name" value="DHQ_synthase"/>
    <property type="match status" value="1"/>
</dbReference>
<dbReference type="InterPro" id="IPR050071">
    <property type="entry name" value="Dehydroquinate_synthase"/>
</dbReference>
<dbReference type="InterPro" id="IPR016037">
    <property type="entry name" value="DHQ_synth_AroB"/>
</dbReference>
<dbReference type="InterPro" id="IPR030963">
    <property type="entry name" value="DHQ_synth_fam"/>
</dbReference>
<dbReference type="InterPro" id="IPR030960">
    <property type="entry name" value="DHQS/DOIS_N"/>
</dbReference>
<dbReference type="InterPro" id="IPR056179">
    <property type="entry name" value="DHQS_C"/>
</dbReference>
<dbReference type="NCBIfam" id="TIGR01357">
    <property type="entry name" value="aroB"/>
    <property type="match status" value="1"/>
</dbReference>
<dbReference type="PANTHER" id="PTHR43622">
    <property type="entry name" value="3-DEHYDROQUINATE SYNTHASE"/>
    <property type="match status" value="1"/>
</dbReference>
<dbReference type="PANTHER" id="PTHR43622:SF7">
    <property type="entry name" value="3-DEHYDROQUINATE SYNTHASE, CHLOROPLASTIC"/>
    <property type="match status" value="1"/>
</dbReference>
<dbReference type="Pfam" id="PF01761">
    <property type="entry name" value="DHQ_synthase"/>
    <property type="match status" value="1"/>
</dbReference>
<dbReference type="Pfam" id="PF24621">
    <property type="entry name" value="DHQS_C"/>
    <property type="match status" value="1"/>
</dbReference>
<dbReference type="PIRSF" id="PIRSF001455">
    <property type="entry name" value="DHQ_synth"/>
    <property type="match status" value="1"/>
</dbReference>
<dbReference type="SUPFAM" id="SSF56796">
    <property type="entry name" value="Dehydroquinate synthase-like"/>
    <property type="match status" value="1"/>
</dbReference>
<name>AROB_HELPH</name>
<proteinExistence type="inferred from homology"/>
<accession>Q1CUM0</accession>